<evidence type="ECO:0000250" key="1">
    <source>
        <dbReference type="UniProtKB" id="O80460"/>
    </source>
</evidence>
<evidence type="ECO:0000250" key="2">
    <source>
        <dbReference type="UniProtKB" id="Q058G9"/>
    </source>
</evidence>
<evidence type="ECO:0000250" key="3">
    <source>
        <dbReference type="UniProtKB" id="Q8L8Y3"/>
    </source>
</evidence>
<evidence type="ECO:0000255" key="4"/>
<evidence type="ECO:0000255" key="5">
    <source>
        <dbReference type="PROSITE-ProRule" id="PRU00498"/>
    </source>
</evidence>
<evidence type="ECO:0000256" key="6">
    <source>
        <dbReference type="SAM" id="MobiDB-lite"/>
    </source>
</evidence>
<evidence type="ECO:0000269" key="7">
    <source>
    </source>
</evidence>
<evidence type="ECO:0000303" key="8">
    <source>
    </source>
</evidence>
<evidence type="ECO:0000305" key="9"/>
<dbReference type="EMBL" id="AB010700">
    <property type="status" value="NOT_ANNOTATED_CDS"/>
    <property type="molecule type" value="Genomic_DNA"/>
</dbReference>
<dbReference type="EMBL" id="CP002688">
    <property type="status" value="NOT_ANNOTATED_CDS"/>
    <property type="molecule type" value="Genomic_DNA"/>
</dbReference>
<dbReference type="STRING" id="3702.P0DN97"/>
<dbReference type="GlyCosmos" id="P0DN97">
    <property type="glycosylation" value="1 site, No reported glycans"/>
</dbReference>
<dbReference type="GlyGen" id="P0DN97">
    <property type="glycosylation" value="1 site"/>
</dbReference>
<dbReference type="Araport" id="AT5G66819"/>
<dbReference type="TAIR" id="AT5G66819"/>
<dbReference type="InParanoid" id="P0DN97"/>
<dbReference type="PRO" id="PR:P0DN97"/>
<dbReference type="Proteomes" id="UP000006548">
    <property type="component" value="Chromosome 5"/>
</dbReference>
<dbReference type="GO" id="GO:0048046">
    <property type="term" value="C:apoplast"/>
    <property type="evidence" value="ECO:0000250"/>
    <property type="project" value="UniProtKB"/>
</dbReference>
<dbReference type="GO" id="GO:0005576">
    <property type="term" value="C:extracellular region"/>
    <property type="evidence" value="ECO:0000318"/>
    <property type="project" value="GO_Central"/>
</dbReference>
<dbReference type="GO" id="GO:0005179">
    <property type="term" value="F:hormone activity"/>
    <property type="evidence" value="ECO:0000250"/>
    <property type="project" value="UniProtKB"/>
</dbReference>
<dbReference type="GO" id="GO:0006995">
    <property type="term" value="P:cellular response to nitrogen starvation"/>
    <property type="evidence" value="ECO:0000270"/>
    <property type="project" value="UniProtKB"/>
</dbReference>
<dbReference type="GO" id="GO:1902025">
    <property type="term" value="P:nitrate import"/>
    <property type="evidence" value="ECO:0000314"/>
    <property type="project" value="UniProtKB"/>
</dbReference>
<dbReference type="GO" id="GO:1901371">
    <property type="term" value="P:regulation of leaf morphogenesis"/>
    <property type="evidence" value="ECO:0000318"/>
    <property type="project" value="GO_Central"/>
</dbReference>
<dbReference type="GO" id="GO:2000280">
    <property type="term" value="P:regulation of root development"/>
    <property type="evidence" value="ECO:0000250"/>
    <property type="project" value="UniProtKB"/>
</dbReference>
<dbReference type="GO" id="GO:0048364">
    <property type="term" value="P:root development"/>
    <property type="evidence" value="ECO:0007669"/>
    <property type="project" value="InterPro"/>
</dbReference>
<dbReference type="InterPro" id="IPR033250">
    <property type="entry name" value="CEP"/>
</dbReference>
<dbReference type="PANTHER" id="PTHR33348">
    <property type="entry name" value="PRECURSOR OF CEP5"/>
    <property type="match status" value="1"/>
</dbReference>
<dbReference type="PANTHER" id="PTHR33348:SF42">
    <property type="entry name" value="PRECURSOR OF CEP8"/>
    <property type="match status" value="1"/>
</dbReference>
<gene>
    <name evidence="8" type="primary">CEP8</name>
    <name evidence="9" type="ordered locus">At5g66819</name>
    <name evidence="9" type="ORF">MUD21</name>
</gene>
<feature type="signal peptide" evidence="4">
    <location>
        <begin position="1"/>
        <end position="29"/>
    </location>
</feature>
<feature type="propeptide" id="PRO_0000439984" evidence="9">
    <location>
        <begin position="30"/>
        <end position="72"/>
    </location>
</feature>
<feature type="peptide" id="PRO_0000439985" description="C-terminally encoded peptide 8" evidence="2">
    <location>
        <begin position="73"/>
        <end position="87"/>
    </location>
</feature>
<feature type="region of interest" description="Disordered" evidence="6">
    <location>
        <begin position="41"/>
        <end position="87"/>
    </location>
</feature>
<feature type="compositionally biased region" description="Gly residues" evidence="6">
    <location>
        <begin position="49"/>
        <end position="59"/>
    </location>
</feature>
<feature type="compositionally biased region" description="Basic and acidic residues" evidence="6">
    <location>
        <begin position="63"/>
        <end position="75"/>
    </location>
</feature>
<feature type="modified residue" description="Hydroxyproline" evidence="3">
    <location>
        <position position="76"/>
    </location>
</feature>
<feature type="modified residue" description="Hydroxyproline" evidence="2">
    <location>
        <position position="79"/>
    </location>
</feature>
<feature type="modified residue" description="Hydroxyproline" evidence="3">
    <location>
        <position position="83"/>
    </location>
</feature>
<feature type="glycosylation site" description="N-linked (GlcNAc...) asparagine" evidence="5">
    <location>
        <position position="41"/>
    </location>
</feature>
<reference key="1">
    <citation type="journal article" date="1998" name="DNA Res.">
        <title>Structural analysis of Arabidopsis thaliana chromosome 5. V. Sequence features of the regions of 1,381,565 bp covered by twenty one physically assigned P1 and TAC clones.</title>
        <authorList>
            <person name="Kaneko T."/>
            <person name="Kotani H."/>
            <person name="Nakamura Y."/>
            <person name="Sato S."/>
            <person name="Asamizu E."/>
            <person name="Miyajima N."/>
            <person name="Tabata S."/>
        </authorList>
    </citation>
    <scope>NUCLEOTIDE SEQUENCE [LARGE SCALE GENOMIC DNA]</scope>
    <source>
        <strain>cv. Columbia</strain>
    </source>
</reference>
<reference key="2">
    <citation type="journal article" date="2017" name="Plant J.">
        <title>Araport11: a complete reannotation of the Arabidopsis thaliana reference genome.</title>
        <authorList>
            <person name="Cheng C.Y."/>
            <person name="Krishnakumar V."/>
            <person name="Chan A.P."/>
            <person name="Thibaud-Nissen F."/>
            <person name="Schobel S."/>
            <person name="Town C.D."/>
        </authorList>
    </citation>
    <scope>GENOME REANNOTATION</scope>
    <source>
        <strain>cv. Columbia</strain>
    </source>
</reference>
<reference key="3">
    <citation type="journal article" date="2013" name="J. Exp. Bot.">
        <title>The CEP family in land plants: evolutionary analyses, expression studies, and role in Arabidopsis shoot development.</title>
        <authorList>
            <person name="Roberts I."/>
            <person name="Smith S."/>
            <person name="De Rybel B."/>
            <person name="Van Den Broeke J."/>
            <person name="Smet W."/>
            <person name="De Cokere S."/>
            <person name="Mispelaere M."/>
            <person name="De Smet I."/>
            <person name="Beeckman T."/>
        </authorList>
    </citation>
    <scope>GENE FAMILY</scope>
    <source>
        <strain>cv. Columbia</strain>
    </source>
</reference>
<reference key="4">
    <citation type="journal article" date="2013" name="J. Exp. Bot.">
        <title>CEP genes regulate root and shoot development in response to environmental cues and are specific to seed plants.</title>
        <authorList>
            <person name="Delay C."/>
            <person name="Imin N."/>
            <person name="Djordjevic M.A."/>
        </authorList>
    </citation>
    <scope>GENE FAMILY</scope>
    <scope>NOMENCLATURE</scope>
    <source>
        <strain>cv. Columbia</strain>
    </source>
</reference>
<reference key="5">
    <citation type="journal article" date="2014" name="Science">
        <title>Perception of root-derived peptides by shoot LRR-RKs mediates systemic N-demand signaling.</title>
        <authorList>
            <person name="Tabata R."/>
            <person name="Sumida K."/>
            <person name="Yoshii T."/>
            <person name="Ohyama K."/>
            <person name="Shinohara H."/>
            <person name="Matsubayashi Y."/>
        </authorList>
    </citation>
    <scope>TISSUE SPECIFICITY</scope>
    <scope>FUNCTION</scope>
    <scope>INDUCTION BY NITROGEN DEPLETION</scope>
    <source>
        <strain>cv. No-0</strain>
    </source>
</reference>
<accession>P0DN97</accession>
<proteinExistence type="evidence at transcript level"/>
<keyword id="KW-0052">Apoplast</keyword>
<keyword id="KW-0217">Developmental protein</keyword>
<keyword id="KW-0325">Glycoprotein</keyword>
<keyword id="KW-0372">Hormone</keyword>
<keyword id="KW-0379">Hydroxylation</keyword>
<keyword id="KW-1185">Reference proteome</keyword>
<keyword id="KW-0964">Secreted</keyword>
<keyword id="KW-0732">Signal</keyword>
<protein>
    <recommendedName>
        <fullName evidence="8">Precursor of CEP8</fullName>
        <shortName evidence="8">PCEP8</shortName>
    </recommendedName>
    <component>
        <recommendedName>
            <fullName evidence="8">C-terminally encoded peptide 8</fullName>
            <shortName evidence="8">CEP8</shortName>
        </recommendedName>
    </component>
</protein>
<sequence length="87" mass="9373">MAKALFFNFCISLLIIAILVSHEIIPTEARHLRTHRKSIKNSTLTVHEGAGGLRTGGGSVKTDISKEEHGVDEFRPTTPGNSPGIGH</sequence>
<organism>
    <name type="scientific">Arabidopsis thaliana</name>
    <name type="common">Mouse-ear cress</name>
    <dbReference type="NCBI Taxonomy" id="3702"/>
    <lineage>
        <taxon>Eukaryota</taxon>
        <taxon>Viridiplantae</taxon>
        <taxon>Streptophyta</taxon>
        <taxon>Embryophyta</taxon>
        <taxon>Tracheophyta</taxon>
        <taxon>Spermatophyta</taxon>
        <taxon>Magnoliopsida</taxon>
        <taxon>eudicotyledons</taxon>
        <taxon>Gunneridae</taxon>
        <taxon>Pentapetalae</taxon>
        <taxon>rosids</taxon>
        <taxon>malvids</taxon>
        <taxon>Brassicales</taxon>
        <taxon>Brassicaceae</taxon>
        <taxon>Camelineae</taxon>
        <taxon>Arabidopsis</taxon>
    </lineage>
</organism>
<name>PCEP8_ARATH</name>
<comment type="function">
    <text evidence="3 7">Extracellular signaling peptide that may regulate primary root growth rate and systemic nitrogen (N)-demand signaling (By similarity). Mediates up-regulation of genes involved in N uptake and assimilation pathways (PubMed:25324386).</text>
</comment>
<comment type="subunit">
    <text evidence="3">Interacts with CEP receptors (e.g. CEPR1 and CEPR2).</text>
</comment>
<comment type="subcellular location">
    <molecule>C-terminally encoded peptide 8</molecule>
    <subcellularLocation>
        <location evidence="1">Secreted</location>
        <location evidence="1">Extracellular space</location>
        <location evidence="1">Apoplast</location>
    </subcellularLocation>
    <text evidence="1">Accumulates in xylem sap.</text>
</comment>
<comment type="tissue specificity">
    <text evidence="7">Expressed in lateral root primordia and in lateral roots excluding the meristem region. Also present in the aerial tissues, such as leaf petioles and the shoot apex region.</text>
</comment>
<comment type="induction">
    <text evidence="7">Triggered by nitrogen depletion.</text>
</comment>
<comment type="PTM">
    <text evidence="3">The mature small signaling peptide is generated by proteolytic processing of the longer precursor.</text>
</comment>
<comment type="similarity">
    <text evidence="9">Belongs to the C-terminally encoded plant signaling peptide (CEP) family.</text>
</comment>